<comment type="similarity">
    <text evidence="1">Belongs to the UPF0297 family.</text>
</comment>
<name>Y1776_STRU0</name>
<keyword id="KW-1185">Reference proteome</keyword>
<accession>B9DW63</accession>
<sequence>MGFTDETVRFKLDDGDKKEISETLTAVYHSLEEKGYNPINQIVGYVLSGDPAYVPRYNDARNQIRKYERDEIVEELVRYYLQGNGIDVK</sequence>
<gene>
    <name type="ordered locus">SUB1776</name>
</gene>
<evidence type="ECO:0000255" key="1">
    <source>
        <dbReference type="HAMAP-Rule" id="MF_01507"/>
    </source>
</evidence>
<feature type="chain" id="PRO_1000185048" description="UPF0297 protein SUB1776">
    <location>
        <begin position="1"/>
        <end position="89"/>
    </location>
</feature>
<dbReference type="EMBL" id="AM946015">
    <property type="protein sequence ID" value="CAR43764.1"/>
    <property type="molecule type" value="Genomic_DNA"/>
</dbReference>
<dbReference type="RefSeq" id="WP_003083367.1">
    <property type="nucleotide sequence ID" value="NC_012004.1"/>
</dbReference>
<dbReference type="SMR" id="B9DW63"/>
<dbReference type="STRING" id="218495.SUB1776"/>
<dbReference type="KEGG" id="sub:SUB1776"/>
<dbReference type="eggNOG" id="COG4472">
    <property type="taxonomic scope" value="Bacteria"/>
</dbReference>
<dbReference type="HOGENOM" id="CLU_162466_0_0_9"/>
<dbReference type="OrthoDB" id="9796303at2"/>
<dbReference type="Proteomes" id="UP000000449">
    <property type="component" value="Chromosome"/>
</dbReference>
<dbReference type="HAMAP" id="MF_01507">
    <property type="entry name" value="UPF0297"/>
    <property type="match status" value="1"/>
</dbReference>
<dbReference type="InterPro" id="IPR009309">
    <property type="entry name" value="IreB"/>
</dbReference>
<dbReference type="NCBIfam" id="NF003997">
    <property type="entry name" value="PRK05473.1"/>
    <property type="match status" value="1"/>
</dbReference>
<dbReference type="PANTHER" id="PTHR40067">
    <property type="entry name" value="UPF0297 PROTEIN YRZL"/>
    <property type="match status" value="1"/>
</dbReference>
<dbReference type="PANTHER" id="PTHR40067:SF1">
    <property type="entry name" value="UPF0297 PROTEIN YRZL"/>
    <property type="match status" value="1"/>
</dbReference>
<dbReference type="Pfam" id="PF06135">
    <property type="entry name" value="IreB"/>
    <property type="match status" value="1"/>
</dbReference>
<dbReference type="PIRSF" id="PIRSF037258">
    <property type="entry name" value="DUF965_bac"/>
    <property type="match status" value="1"/>
</dbReference>
<protein>
    <recommendedName>
        <fullName evidence="1">UPF0297 protein SUB1776</fullName>
    </recommendedName>
</protein>
<organism>
    <name type="scientific">Streptococcus uberis (strain ATCC BAA-854 / 0140J)</name>
    <dbReference type="NCBI Taxonomy" id="218495"/>
    <lineage>
        <taxon>Bacteria</taxon>
        <taxon>Bacillati</taxon>
        <taxon>Bacillota</taxon>
        <taxon>Bacilli</taxon>
        <taxon>Lactobacillales</taxon>
        <taxon>Streptococcaceae</taxon>
        <taxon>Streptococcus</taxon>
    </lineage>
</organism>
<reference key="1">
    <citation type="journal article" date="2009" name="BMC Genomics">
        <title>Evidence for niche adaptation in the genome of the bovine pathogen Streptococcus uberis.</title>
        <authorList>
            <person name="Ward P.N."/>
            <person name="Holden M.T.G."/>
            <person name="Leigh J.A."/>
            <person name="Lennard N."/>
            <person name="Bignell A."/>
            <person name="Barron A."/>
            <person name="Clark L."/>
            <person name="Quail M.A."/>
            <person name="Woodward J."/>
            <person name="Barrell B.G."/>
            <person name="Egan S.A."/>
            <person name="Field T.R."/>
            <person name="Maskell D."/>
            <person name="Kehoe M."/>
            <person name="Dowson C.G."/>
            <person name="Chanter N."/>
            <person name="Whatmore A.M."/>
            <person name="Bentley S.D."/>
            <person name="Parkhill J."/>
        </authorList>
    </citation>
    <scope>NUCLEOTIDE SEQUENCE [LARGE SCALE GENOMIC DNA]</scope>
    <source>
        <strain>ATCC BAA-854 / 0140J</strain>
    </source>
</reference>
<proteinExistence type="inferred from homology"/>